<feature type="transit peptide" description="Mitochondrion" evidence="2">
    <location>
        <begin position="1"/>
        <end position="26"/>
    </location>
</feature>
<feature type="chain" id="PRO_0000261655" description="Large ribosomal subunit protein mL38">
    <location>
        <begin position="27"/>
        <end position="380"/>
    </location>
</feature>
<feature type="coiled-coil region" evidence="2">
    <location>
        <begin position="98"/>
        <end position="123"/>
    </location>
</feature>
<keyword id="KW-0175">Coiled coil</keyword>
<keyword id="KW-0496">Mitochondrion</keyword>
<keyword id="KW-1185">Reference proteome</keyword>
<keyword id="KW-0687">Ribonucleoprotein</keyword>
<keyword id="KW-0689">Ribosomal protein</keyword>
<keyword id="KW-0809">Transit peptide</keyword>
<sequence length="380" mass="44838">MAAPWWRAAFSVTGRCRGISTSASLSRRTPPLGPMPNEDIDVSNLERLEKYRSFERYRRRAEQEAHAPHWWRTYREYFLKETDPKDRINIGLPPPRVSRTQKLQERKRFLQELRANSEEERAARLRTASIPLEAVRAEWERTCGPYHKQRLAEYYGLYRDLFHGATFVPWVPLHVAYALGEEDLIPVYHGNEVTPTEASQAPEVTYEADKDSLWTLLFINLDGHLLEPDAEYLHWLVTNIPSNRVAEGQESCPYLPPFPARGSGFHRFAFLLFKQDKPINFSEDTRPSPCYQLAQRTFHTLDFYKKHQEAMTPAGLAFFQCRWDDSVTHTFHQLLDMREPVFEFVRPPPYHPKQKRFPHQQPLRYLDRYRDSHEPTYGIY</sequence>
<accession>Q5PQN9</accession>
<dbReference type="EMBL" id="BC087096">
    <property type="protein sequence ID" value="AAH87096.1"/>
    <property type="status" value="ALT_INIT"/>
    <property type="molecule type" value="mRNA"/>
</dbReference>
<dbReference type="RefSeq" id="NP_001009369.2">
    <property type="nucleotide sequence ID" value="NM_001009369.2"/>
</dbReference>
<dbReference type="RefSeq" id="XP_008766594.1">
    <property type="nucleotide sequence ID" value="XM_008768372.1"/>
</dbReference>
<dbReference type="SMR" id="Q5PQN9"/>
<dbReference type="FunCoup" id="Q5PQN9">
    <property type="interactions" value="1939"/>
</dbReference>
<dbReference type="IntAct" id="Q5PQN9">
    <property type="interactions" value="4"/>
</dbReference>
<dbReference type="STRING" id="10116.ENSRNOP00000011328"/>
<dbReference type="GlyGen" id="Q5PQN9">
    <property type="glycosylation" value="1 site"/>
</dbReference>
<dbReference type="PhosphoSitePlus" id="Q5PQN9"/>
<dbReference type="jPOST" id="Q5PQN9"/>
<dbReference type="PaxDb" id="10116-ENSRNOP00000011328"/>
<dbReference type="Ensembl" id="ENSRNOT00000011328.6">
    <property type="protein sequence ID" value="ENSRNOP00000011328.3"/>
    <property type="gene ID" value="ENSRNOG00000008256.6"/>
</dbReference>
<dbReference type="GeneID" id="303685"/>
<dbReference type="KEGG" id="rno:303685"/>
<dbReference type="AGR" id="RGD:1311180"/>
<dbReference type="CTD" id="64978"/>
<dbReference type="RGD" id="1311180">
    <property type="gene designation" value="Mrpl38"/>
</dbReference>
<dbReference type="eggNOG" id="KOG3346">
    <property type="taxonomic scope" value="Eukaryota"/>
</dbReference>
<dbReference type="GeneTree" id="ENSGT00900000141125"/>
<dbReference type="HOGENOM" id="CLU_043994_0_0_1"/>
<dbReference type="InParanoid" id="Q5PQN9"/>
<dbReference type="OrthoDB" id="9648at9989"/>
<dbReference type="PhylomeDB" id="Q5PQN9"/>
<dbReference type="TreeFam" id="TF315074"/>
<dbReference type="Reactome" id="R-RNO-5389840">
    <property type="pathway name" value="Mitochondrial translation elongation"/>
</dbReference>
<dbReference type="Reactome" id="R-RNO-5419276">
    <property type="pathway name" value="Mitochondrial translation termination"/>
</dbReference>
<dbReference type="PRO" id="PR:Q5PQN9"/>
<dbReference type="Proteomes" id="UP000002494">
    <property type="component" value="Chromosome 10"/>
</dbReference>
<dbReference type="Bgee" id="ENSRNOG00000008256">
    <property type="expression patterns" value="Expressed in heart and 20 other cell types or tissues"/>
</dbReference>
<dbReference type="GO" id="GO:0005762">
    <property type="term" value="C:mitochondrial large ribosomal subunit"/>
    <property type="evidence" value="ECO:0000266"/>
    <property type="project" value="RGD"/>
</dbReference>
<dbReference type="GO" id="GO:0005739">
    <property type="term" value="C:mitochondrion"/>
    <property type="evidence" value="ECO:0000266"/>
    <property type="project" value="RGD"/>
</dbReference>
<dbReference type="CDD" id="cd00866">
    <property type="entry name" value="PEBP_euk"/>
    <property type="match status" value="1"/>
</dbReference>
<dbReference type="FunFam" id="3.90.280.10:FF:000002">
    <property type="entry name" value="39S ribosomal protein L38, mitochondrial"/>
    <property type="match status" value="1"/>
</dbReference>
<dbReference type="Gene3D" id="3.90.280.10">
    <property type="entry name" value="PEBP-like"/>
    <property type="match status" value="1"/>
</dbReference>
<dbReference type="InterPro" id="IPR008914">
    <property type="entry name" value="PEBP"/>
</dbReference>
<dbReference type="InterPro" id="IPR036610">
    <property type="entry name" value="PEBP-like_sf"/>
</dbReference>
<dbReference type="InterPro" id="IPR035810">
    <property type="entry name" value="PEBP_euk"/>
</dbReference>
<dbReference type="PANTHER" id="PTHR11362:SF133">
    <property type="entry name" value="LARGE RIBOSOMAL SUBUNIT PROTEIN ML38"/>
    <property type="match status" value="1"/>
</dbReference>
<dbReference type="PANTHER" id="PTHR11362">
    <property type="entry name" value="PHOSPHATIDYLETHANOLAMINE-BINDING PROTEIN"/>
    <property type="match status" value="1"/>
</dbReference>
<dbReference type="Pfam" id="PF01161">
    <property type="entry name" value="PBP"/>
    <property type="match status" value="1"/>
</dbReference>
<dbReference type="SUPFAM" id="SSF49777">
    <property type="entry name" value="PEBP-like"/>
    <property type="match status" value="1"/>
</dbReference>
<name>RM38_RAT</name>
<reference key="1">
    <citation type="submission" date="2004-12" db="EMBL/GenBank/DDBJ databases">
        <authorList>
            <consortium name="NIH - Mammalian Gene Collection (MGC) project"/>
        </authorList>
    </citation>
    <scope>NUCLEOTIDE SEQUENCE [LARGE SCALE MRNA]</scope>
    <source>
        <tissue>Heart</tissue>
    </source>
</reference>
<proteinExistence type="evidence at transcript level"/>
<protein>
    <recommendedName>
        <fullName evidence="3">Large ribosomal subunit protein mL38</fullName>
    </recommendedName>
    <alternativeName>
        <fullName>39S ribosomal protein L38, mitochondrial</fullName>
        <shortName>L38mt</shortName>
        <shortName>MRP-L38</shortName>
    </alternativeName>
</protein>
<gene>
    <name type="primary">Mrpl38</name>
</gene>
<evidence type="ECO:0000250" key="1">
    <source>
        <dbReference type="UniProtKB" id="Q96DV4"/>
    </source>
</evidence>
<evidence type="ECO:0000255" key="2"/>
<evidence type="ECO:0000305" key="3"/>
<organism>
    <name type="scientific">Rattus norvegicus</name>
    <name type="common">Rat</name>
    <dbReference type="NCBI Taxonomy" id="10116"/>
    <lineage>
        <taxon>Eukaryota</taxon>
        <taxon>Metazoa</taxon>
        <taxon>Chordata</taxon>
        <taxon>Craniata</taxon>
        <taxon>Vertebrata</taxon>
        <taxon>Euteleostomi</taxon>
        <taxon>Mammalia</taxon>
        <taxon>Eutheria</taxon>
        <taxon>Euarchontoglires</taxon>
        <taxon>Glires</taxon>
        <taxon>Rodentia</taxon>
        <taxon>Myomorpha</taxon>
        <taxon>Muroidea</taxon>
        <taxon>Muridae</taxon>
        <taxon>Murinae</taxon>
        <taxon>Rattus</taxon>
    </lineage>
</organism>
<comment type="subunit">
    <text evidence="1">Component of the mitochondrial ribosome large subunit (39S) which comprises a 16S rRNA and about 50 distinct proteins.</text>
</comment>
<comment type="subcellular location">
    <subcellularLocation>
        <location evidence="1">Mitochondrion</location>
    </subcellularLocation>
</comment>
<comment type="similarity">
    <text evidence="3">Belongs to the phosphatidylethanolamine-binding protein family. Mitochondrion-specific ribosomal protein mL38 subfamily.</text>
</comment>
<comment type="sequence caution" evidence="3">
    <conflict type="erroneous initiation">
        <sequence resource="EMBL-CDS" id="AAH87096"/>
    </conflict>
</comment>